<dbReference type="EMBL" id="AP007255">
    <property type="protein sequence ID" value="BAE52878.1"/>
    <property type="molecule type" value="Genomic_DNA"/>
</dbReference>
<dbReference type="RefSeq" id="WP_011386425.1">
    <property type="nucleotide sequence ID" value="NC_007626.1"/>
</dbReference>
<dbReference type="SMR" id="Q2VZU7"/>
<dbReference type="STRING" id="342108.amb4074"/>
<dbReference type="KEGG" id="mag:amb4074"/>
<dbReference type="HOGENOM" id="CLU_070525_0_1_5"/>
<dbReference type="OrthoDB" id="9805006at2"/>
<dbReference type="Proteomes" id="UP000007058">
    <property type="component" value="Chromosome"/>
</dbReference>
<dbReference type="GO" id="GO:0005829">
    <property type="term" value="C:cytosol"/>
    <property type="evidence" value="ECO:0007669"/>
    <property type="project" value="TreeGrafter"/>
</dbReference>
<dbReference type="GO" id="GO:0000028">
    <property type="term" value="P:ribosomal small subunit assembly"/>
    <property type="evidence" value="ECO:0007669"/>
    <property type="project" value="TreeGrafter"/>
</dbReference>
<dbReference type="GO" id="GO:0006412">
    <property type="term" value="P:translation"/>
    <property type="evidence" value="ECO:0007669"/>
    <property type="project" value="TreeGrafter"/>
</dbReference>
<dbReference type="CDD" id="cd01734">
    <property type="entry name" value="YlxS_C"/>
    <property type="match status" value="1"/>
</dbReference>
<dbReference type="FunFam" id="3.30.300.70:FF:000001">
    <property type="entry name" value="Ribosome maturation factor RimP"/>
    <property type="match status" value="1"/>
</dbReference>
<dbReference type="Gene3D" id="2.30.30.180">
    <property type="entry name" value="Ribosome maturation factor RimP, C-terminal domain"/>
    <property type="match status" value="1"/>
</dbReference>
<dbReference type="Gene3D" id="3.30.300.70">
    <property type="entry name" value="RimP-like superfamily, N-terminal"/>
    <property type="match status" value="1"/>
</dbReference>
<dbReference type="HAMAP" id="MF_01077">
    <property type="entry name" value="RimP"/>
    <property type="match status" value="1"/>
</dbReference>
<dbReference type="InterPro" id="IPR003728">
    <property type="entry name" value="Ribosome_maturation_RimP"/>
</dbReference>
<dbReference type="InterPro" id="IPR028998">
    <property type="entry name" value="RimP_C"/>
</dbReference>
<dbReference type="InterPro" id="IPR036847">
    <property type="entry name" value="RimP_C_sf"/>
</dbReference>
<dbReference type="InterPro" id="IPR028989">
    <property type="entry name" value="RimP_N"/>
</dbReference>
<dbReference type="InterPro" id="IPR035956">
    <property type="entry name" value="RimP_N_sf"/>
</dbReference>
<dbReference type="NCBIfam" id="NF000932">
    <property type="entry name" value="PRK00092.2-5"/>
    <property type="match status" value="1"/>
</dbReference>
<dbReference type="PANTHER" id="PTHR33867">
    <property type="entry name" value="RIBOSOME MATURATION FACTOR RIMP"/>
    <property type="match status" value="1"/>
</dbReference>
<dbReference type="PANTHER" id="PTHR33867:SF1">
    <property type="entry name" value="RIBOSOME MATURATION FACTOR RIMP"/>
    <property type="match status" value="1"/>
</dbReference>
<dbReference type="Pfam" id="PF17384">
    <property type="entry name" value="DUF150_C"/>
    <property type="match status" value="1"/>
</dbReference>
<dbReference type="Pfam" id="PF02576">
    <property type="entry name" value="RimP_N"/>
    <property type="match status" value="1"/>
</dbReference>
<dbReference type="SUPFAM" id="SSF74942">
    <property type="entry name" value="YhbC-like, C-terminal domain"/>
    <property type="match status" value="1"/>
</dbReference>
<dbReference type="SUPFAM" id="SSF75420">
    <property type="entry name" value="YhbC-like, N-terminal domain"/>
    <property type="match status" value="1"/>
</dbReference>
<sequence length="166" mass="18056">MDLQSRLEALIAPSLDAMGYELVRVQLQGKQRLTLQIMADRKDGVMMAVDDCADISRSVSALLDVEDPISAAYTLEVSSPGIDRPLTRAKDFVAWAGFEAKMESCQPIDGRKRFRGKLLGLDEAGVNVRLVIEAAGEIAIPLADVRGAKLVLTDELIAATLKDQEE</sequence>
<proteinExistence type="inferred from homology"/>
<keyword id="KW-0963">Cytoplasm</keyword>
<keyword id="KW-0690">Ribosome biogenesis</keyword>
<accession>Q2VZU7</accession>
<reference key="1">
    <citation type="journal article" date="2005" name="DNA Res.">
        <title>Complete genome sequence of the facultative anaerobic magnetotactic bacterium Magnetospirillum sp. strain AMB-1.</title>
        <authorList>
            <person name="Matsunaga T."/>
            <person name="Okamura Y."/>
            <person name="Fukuda Y."/>
            <person name="Wahyudi A.T."/>
            <person name="Murase Y."/>
            <person name="Takeyama H."/>
        </authorList>
    </citation>
    <scope>NUCLEOTIDE SEQUENCE [LARGE SCALE GENOMIC DNA]</scope>
    <source>
        <strain>ATCC 700264 / AMB-1</strain>
    </source>
</reference>
<comment type="function">
    <text evidence="1">Required for maturation of 30S ribosomal subunits.</text>
</comment>
<comment type="subcellular location">
    <subcellularLocation>
        <location evidence="1">Cytoplasm</location>
    </subcellularLocation>
</comment>
<comment type="similarity">
    <text evidence="1">Belongs to the RimP family.</text>
</comment>
<evidence type="ECO:0000255" key="1">
    <source>
        <dbReference type="HAMAP-Rule" id="MF_01077"/>
    </source>
</evidence>
<gene>
    <name evidence="1" type="primary">rimP</name>
    <name type="ordered locus">amb4074</name>
</gene>
<feature type="chain" id="PRO_0000384698" description="Ribosome maturation factor RimP">
    <location>
        <begin position="1"/>
        <end position="166"/>
    </location>
</feature>
<protein>
    <recommendedName>
        <fullName evidence="1">Ribosome maturation factor RimP</fullName>
    </recommendedName>
</protein>
<name>RIMP_PARM1</name>
<organism>
    <name type="scientific">Paramagnetospirillum magneticum (strain ATCC 700264 / AMB-1)</name>
    <name type="common">Magnetospirillum magneticum</name>
    <dbReference type="NCBI Taxonomy" id="342108"/>
    <lineage>
        <taxon>Bacteria</taxon>
        <taxon>Pseudomonadati</taxon>
        <taxon>Pseudomonadota</taxon>
        <taxon>Alphaproteobacteria</taxon>
        <taxon>Rhodospirillales</taxon>
        <taxon>Magnetospirillaceae</taxon>
        <taxon>Paramagnetospirillum</taxon>
    </lineage>
</organism>